<gene>
    <name type="ordered locus">Mal-060</name>
</gene>
<protein>
    <recommendedName>
        <fullName>Uncharacterized protein K421R</fullName>
        <shortName>pK421R</shortName>
    </recommendedName>
</protein>
<dbReference type="EMBL" id="AY261361">
    <property type="status" value="NOT_ANNOTATED_CDS"/>
    <property type="molecule type" value="Genomic_DNA"/>
</dbReference>
<dbReference type="Proteomes" id="UP000000860">
    <property type="component" value="Segment"/>
</dbReference>
<dbReference type="GO" id="GO:0044423">
    <property type="term" value="C:virion component"/>
    <property type="evidence" value="ECO:0007669"/>
    <property type="project" value="UniProtKB-KW"/>
</dbReference>
<keyword id="KW-0426">Late protein</keyword>
<keyword id="KW-0946">Virion</keyword>
<organismHost>
    <name type="scientific">Ornithodoros</name>
    <name type="common">relapsing fever ticks</name>
    <dbReference type="NCBI Taxonomy" id="6937"/>
</organismHost>
<organismHost>
    <name type="scientific">Phacochoerus aethiopicus</name>
    <name type="common">Warthog</name>
    <dbReference type="NCBI Taxonomy" id="85517"/>
</organismHost>
<organismHost>
    <name type="scientific">Phacochoerus africanus</name>
    <name type="common">Warthog</name>
    <dbReference type="NCBI Taxonomy" id="41426"/>
</organismHost>
<organismHost>
    <name type="scientific">Potamochoerus larvatus</name>
    <name type="common">Bushpig</name>
    <dbReference type="NCBI Taxonomy" id="273792"/>
</organismHost>
<organismHost>
    <name type="scientific">Sus scrofa</name>
    <name type="common">Pig</name>
    <dbReference type="NCBI Taxonomy" id="9823"/>
</organismHost>
<feature type="chain" id="PRO_0000373682" description="Uncharacterized protein K421R">
    <location>
        <begin position="1"/>
        <end position="420"/>
    </location>
</feature>
<reference key="1">
    <citation type="submission" date="2003-03" db="EMBL/GenBank/DDBJ databases">
        <title>African swine fever virus genomes.</title>
        <authorList>
            <person name="Kutish G.F."/>
            <person name="Rock D.L."/>
        </authorList>
    </citation>
    <scope>NUCLEOTIDE SEQUENCE [LARGE SCALE GENOMIC DNA]</scope>
</reference>
<organism>
    <name type="scientific">African swine fever virus (isolate Tick/Malawi/Lil 20-1/1983)</name>
    <name type="common">ASFV</name>
    <dbReference type="NCBI Taxonomy" id="10500"/>
    <lineage>
        <taxon>Viruses</taxon>
        <taxon>Varidnaviria</taxon>
        <taxon>Bamfordvirae</taxon>
        <taxon>Nucleocytoviricota</taxon>
        <taxon>Pokkesviricetes</taxon>
        <taxon>Asfuvirales</taxon>
        <taxon>Asfarviridae</taxon>
        <taxon>Asfivirus</taxon>
        <taxon>African swine fever virus</taxon>
    </lineage>
</organism>
<accession>P0CAG7</accession>
<evidence type="ECO:0000250" key="1">
    <source>
        <dbReference type="UniProtKB" id="Q07384"/>
    </source>
</evidence>
<evidence type="ECO:0000305" key="2"/>
<proteinExistence type="inferred from homology"/>
<name>VF421_ASFM2</name>
<comment type="subcellular location">
    <subcellularLocation>
        <location evidence="1">Virion</location>
    </subcellularLocation>
</comment>
<comment type="induction">
    <text evidence="2">Expressed in the late phase of the viral replicative cycle.</text>
</comment>
<comment type="similarity">
    <text evidence="2">Belongs to the asfivirus K421R family.</text>
</comment>
<sequence length="420" mass="49135">MYTHVDVVGIAEASAALYVQKDRDRYLDVLTTIENFIYQHKCILTGESAHLLFLKKSIYLYEFYSDNVAEHSKALATLLYNLDPEYLTRYTVLITKIPNHWYVINVDQREFVRLYAIPAVKQHLPIPILPFHCTSALTQQDLFCLGPELQLIQIYSKLCNPNFVEEWPTLLDYEKNMRTLFLEQFPEKLEKTGGKKEKEEKHESIIKKIILEMVSTHQRIVVGGYIQKNLYNHVIKNRNRLQLITSLNIYEEKDIIQQFCDSNGLKIKICVNNPLLPTNPELRRLTIYFNNNDDQSYLIVDMYNTGSYELVPTNQINTLDNSFLIGTPFVQARFLLVEIWVLMLIAQQTKKDTKKIIQFFINQYETLMNSPWPSIEALFPSSSKRYLGNYVDPNALIKWAQLKLKRIPPFYPGRPDEESC</sequence>